<proteinExistence type="inferred from homology"/>
<protein>
    <recommendedName>
        <fullName evidence="1">Indole-3-glycerol phosphate synthase</fullName>
        <shortName evidence="1">IGPS</shortName>
        <ecNumber evidence="1">4.1.1.48</ecNumber>
    </recommendedName>
</protein>
<sequence>MADILTQIVQTKTEAVTAARLRVPEAELKAMAGDRDSKRPFAENLRQVHAQGGTGIIAEIKRASPSRGIIQADLDPADCAAKYEAGGAAAISVLTDAPYFKGSLSDLKQARKACSLPVLRKEFILSDYQVYESAAAGADAVLLIVRILTQTMLSDLIGLCRALGLDTLVEIHDENDLETATNAGAKLIGINNRDLKTFKTDIAVATRLVSNFGPDQVPVAASGIGSREDIERTKAAGIYNFLIGESLVRAEDTVSFLKQLLTT</sequence>
<organism>
    <name type="scientific">Desulfosudis oleivorans (strain DSM 6200 / JCM 39069 / Hxd3)</name>
    <name type="common">Desulfococcus oleovorans</name>
    <dbReference type="NCBI Taxonomy" id="96561"/>
    <lineage>
        <taxon>Bacteria</taxon>
        <taxon>Pseudomonadati</taxon>
        <taxon>Thermodesulfobacteriota</taxon>
        <taxon>Desulfobacteria</taxon>
        <taxon>Desulfobacterales</taxon>
        <taxon>Desulfosudaceae</taxon>
        <taxon>Desulfosudis</taxon>
    </lineage>
</organism>
<evidence type="ECO:0000255" key="1">
    <source>
        <dbReference type="HAMAP-Rule" id="MF_00134"/>
    </source>
</evidence>
<reference key="1">
    <citation type="submission" date="2007-10" db="EMBL/GenBank/DDBJ databases">
        <title>Complete sequence of Desulfococcus oleovorans Hxd3.</title>
        <authorList>
            <consortium name="US DOE Joint Genome Institute"/>
            <person name="Copeland A."/>
            <person name="Lucas S."/>
            <person name="Lapidus A."/>
            <person name="Barry K."/>
            <person name="Glavina del Rio T."/>
            <person name="Dalin E."/>
            <person name="Tice H."/>
            <person name="Pitluck S."/>
            <person name="Kiss H."/>
            <person name="Brettin T."/>
            <person name="Bruce D."/>
            <person name="Detter J.C."/>
            <person name="Han C."/>
            <person name="Schmutz J."/>
            <person name="Larimer F."/>
            <person name="Land M."/>
            <person name="Hauser L."/>
            <person name="Kyrpides N."/>
            <person name="Kim E."/>
            <person name="Wawrik B."/>
            <person name="Richardson P."/>
        </authorList>
    </citation>
    <scope>NUCLEOTIDE SEQUENCE [LARGE SCALE GENOMIC DNA]</scope>
    <source>
        <strain>DSM 6200 / JCM 39069 / Hxd3</strain>
    </source>
</reference>
<keyword id="KW-0028">Amino-acid biosynthesis</keyword>
<keyword id="KW-0057">Aromatic amino acid biosynthesis</keyword>
<keyword id="KW-0210">Decarboxylase</keyword>
<keyword id="KW-0456">Lyase</keyword>
<keyword id="KW-1185">Reference proteome</keyword>
<keyword id="KW-0822">Tryptophan biosynthesis</keyword>
<accession>A8ZZX0</accession>
<comment type="catalytic activity">
    <reaction evidence="1">
        <text>1-(2-carboxyphenylamino)-1-deoxy-D-ribulose 5-phosphate + H(+) = (1S,2R)-1-C-(indol-3-yl)glycerol 3-phosphate + CO2 + H2O</text>
        <dbReference type="Rhea" id="RHEA:23476"/>
        <dbReference type="ChEBI" id="CHEBI:15377"/>
        <dbReference type="ChEBI" id="CHEBI:15378"/>
        <dbReference type="ChEBI" id="CHEBI:16526"/>
        <dbReference type="ChEBI" id="CHEBI:58613"/>
        <dbReference type="ChEBI" id="CHEBI:58866"/>
        <dbReference type="EC" id="4.1.1.48"/>
    </reaction>
</comment>
<comment type="pathway">
    <text evidence="1">Amino-acid biosynthesis; L-tryptophan biosynthesis; L-tryptophan from chorismate: step 4/5.</text>
</comment>
<comment type="similarity">
    <text evidence="1">Belongs to the TrpC family.</text>
</comment>
<dbReference type="EC" id="4.1.1.48" evidence="1"/>
<dbReference type="EMBL" id="CP000859">
    <property type="protein sequence ID" value="ABW67370.1"/>
    <property type="molecule type" value="Genomic_DNA"/>
</dbReference>
<dbReference type="RefSeq" id="WP_012174986.1">
    <property type="nucleotide sequence ID" value="NC_009943.1"/>
</dbReference>
<dbReference type="SMR" id="A8ZZX0"/>
<dbReference type="STRING" id="96561.Dole_1566"/>
<dbReference type="KEGG" id="dol:Dole_1566"/>
<dbReference type="eggNOG" id="COG0134">
    <property type="taxonomic scope" value="Bacteria"/>
</dbReference>
<dbReference type="HOGENOM" id="CLU_034247_2_0_7"/>
<dbReference type="OrthoDB" id="9804217at2"/>
<dbReference type="UniPathway" id="UPA00035">
    <property type="reaction ID" value="UER00043"/>
</dbReference>
<dbReference type="Proteomes" id="UP000008561">
    <property type="component" value="Chromosome"/>
</dbReference>
<dbReference type="GO" id="GO:0004425">
    <property type="term" value="F:indole-3-glycerol-phosphate synthase activity"/>
    <property type="evidence" value="ECO:0007669"/>
    <property type="project" value="UniProtKB-UniRule"/>
</dbReference>
<dbReference type="GO" id="GO:0004640">
    <property type="term" value="F:phosphoribosylanthranilate isomerase activity"/>
    <property type="evidence" value="ECO:0007669"/>
    <property type="project" value="TreeGrafter"/>
</dbReference>
<dbReference type="GO" id="GO:0000162">
    <property type="term" value="P:L-tryptophan biosynthetic process"/>
    <property type="evidence" value="ECO:0007669"/>
    <property type="project" value="UniProtKB-UniRule"/>
</dbReference>
<dbReference type="CDD" id="cd00331">
    <property type="entry name" value="IGPS"/>
    <property type="match status" value="1"/>
</dbReference>
<dbReference type="FunFam" id="3.20.20.70:FF:000024">
    <property type="entry name" value="Indole-3-glycerol phosphate synthase"/>
    <property type="match status" value="1"/>
</dbReference>
<dbReference type="Gene3D" id="3.20.20.70">
    <property type="entry name" value="Aldolase class I"/>
    <property type="match status" value="1"/>
</dbReference>
<dbReference type="HAMAP" id="MF_00134_B">
    <property type="entry name" value="IGPS_B"/>
    <property type="match status" value="1"/>
</dbReference>
<dbReference type="InterPro" id="IPR013785">
    <property type="entry name" value="Aldolase_TIM"/>
</dbReference>
<dbReference type="InterPro" id="IPR045186">
    <property type="entry name" value="Indole-3-glycerol_P_synth"/>
</dbReference>
<dbReference type="InterPro" id="IPR013798">
    <property type="entry name" value="Indole-3-glycerol_P_synth_dom"/>
</dbReference>
<dbReference type="InterPro" id="IPR001468">
    <property type="entry name" value="Indole-3-GlycerolPSynthase_CS"/>
</dbReference>
<dbReference type="InterPro" id="IPR011060">
    <property type="entry name" value="RibuloseP-bd_barrel"/>
</dbReference>
<dbReference type="NCBIfam" id="NF001377">
    <property type="entry name" value="PRK00278.2-4"/>
    <property type="match status" value="1"/>
</dbReference>
<dbReference type="PANTHER" id="PTHR22854:SF2">
    <property type="entry name" value="INDOLE-3-GLYCEROL-PHOSPHATE SYNTHASE"/>
    <property type="match status" value="1"/>
</dbReference>
<dbReference type="PANTHER" id="PTHR22854">
    <property type="entry name" value="TRYPTOPHAN BIOSYNTHESIS PROTEIN"/>
    <property type="match status" value="1"/>
</dbReference>
<dbReference type="Pfam" id="PF00218">
    <property type="entry name" value="IGPS"/>
    <property type="match status" value="1"/>
</dbReference>
<dbReference type="SUPFAM" id="SSF51366">
    <property type="entry name" value="Ribulose-phoshate binding barrel"/>
    <property type="match status" value="1"/>
</dbReference>
<dbReference type="PROSITE" id="PS00614">
    <property type="entry name" value="IGPS"/>
    <property type="match status" value="1"/>
</dbReference>
<gene>
    <name evidence="1" type="primary">trpC</name>
    <name type="ordered locus">Dole_1566</name>
</gene>
<feature type="chain" id="PRO_1000095865" description="Indole-3-glycerol phosphate synthase">
    <location>
        <begin position="1"/>
        <end position="263"/>
    </location>
</feature>
<name>TRPC_DESOH</name>